<keyword id="KW-0002">3D-structure</keyword>
<keyword id="KW-0903">Direct protein sequencing</keyword>
<keyword id="KW-0378">Hydrolase</keyword>
<keyword id="KW-0460">Magnesium</keyword>
<keyword id="KW-0546">Nucleotide metabolism</keyword>
<keyword id="KW-0547">Nucleotide-binding</keyword>
<keyword id="KW-1185">Reference proteome</keyword>
<comment type="function">
    <text evidence="3 4">Bifunctional enzyme that catalyzes both the deamination of dCTP to dUTP and the hydrolysis of dUTP to dUMP without releasing the toxic dUTP intermediate. It also acts as a dUTP diphosphatase with a lower affinity for dUTP than for dCTP.</text>
</comment>
<comment type="catalytic activity">
    <reaction evidence="2 3 4">
        <text>dCTP + 2 H2O = dUMP + NH4(+) + diphosphate</text>
        <dbReference type="Rhea" id="RHEA:19205"/>
        <dbReference type="ChEBI" id="CHEBI:15377"/>
        <dbReference type="ChEBI" id="CHEBI:28938"/>
        <dbReference type="ChEBI" id="CHEBI:33019"/>
        <dbReference type="ChEBI" id="CHEBI:61481"/>
        <dbReference type="ChEBI" id="CHEBI:246422"/>
        <dbReference type="EC" id="3.5.4.30"/>
    </reaction>
</comment>
<comment type="cofactor">
    <cofactor evidence="3 4">
        <name>Mg(2+)</name>
        <dbReference type="ChEBI" id="CHEBI:18420"/>
    </cofactor>
</comment>
<comment type="activity regulation">
    <text evidence="3">Inhibited by dTTP.</text>
</comment>
<comment type="biophysicochemical properties">
    <kinetics>
        <KM evidence="3">17.6 uM for dCTP (at 60 degrees Celsius)</KM>
        <KM evidence="3">263 uM for dUTP (at 60 degrees Celsius)</KM>
        <Vmax evidence="3">14.7 umol/min/mg enzyme with dCTP as substrate (at 60 degrees Celsius)</Vmax>
        <Vmax evidence="3">23.9 umol/min/mg enzyme with dUTP as substrate (at 60 degrees Celsius)</Vmax>
    </kinetics>
    <phDependence>
        <text evidence="3">Optimum pH is 7.5.</text>
    </phDependence>
    <temperatureDependence>
        <text evidence="3">Retains over 70% of its activity after heating at 90 degrees Celsius for 10 minutes.</text>
    </temperatureDependence>
</comment>
<comment type="pathway">
    <text evidence="2">Pyrimidine metabolism; dUMP biosynthesis; dUMP from dCTP: step 1/1.</text>
</comment>
<comment type="subunit">
    <text evidence="5 6">Homotrimer (PubMed:12756253, PubMed:12909016). Two trimers assemble into a hexamer by stacking on top of each other (PubMed:12909016).</text>
</comment>
<comment type="mass spectrometry" mass="23619.0" error="94.0" method="MALDI" evidence="3"/>
<comment type="similarity">
    <text evidence="2 9">Belongs to the dCTP deaminase family.</text>
</comment>
<name>DCDB_METJA</name>
<gene>
    <name evidence="2" type="primary">dcd</name>
    <name type="ordered locus">MJ0430</name>
</gene>
<proteinExistence type="evidence at protein level"/>
<protein>
    <recommendedName>
        <fullName evidence="2 9">dCTP deaminase, dUMP-forming</fullName>
        <ecNumber evidence="2 3 4">3.5.4.30</ecNumber>
    </recommendedName>
    <alternativeName>
        <fullName evidence="2 9">Bifunctional dCTP deaminase:dUTPase</fullName>
    </alternativeName>
    <alternativeName>
        <fullName evidence="2 8">DCD-DUT</fullName>
    </alternativeName>
    <alternativeName>
        <fullName evidence="7">MjDCD-DUT</fullName>
    </alternativeName>
</protein>
<dbReference type="EC" id="3.5.4.30" evidence="2 3 4"/>
<dbReference type="EMBL" id="L77117">
    <property type="protein sequence ID" value="AAB98415.1"/>
    <property type="molecule type" value="Genomic_DNA"/>
</dbReference>
<dbReference type="PIR" id="F64353">
    <property type="entry name" value="F64353"/>
</dbReference>
<dbReference type="RefSeq" id="WP_010869929.1">
    <property type="nucleotide sequence ID" value="NC_000909.1"/>
</dbReference>
<dbReference type="PDB" id="1OGH">
    <property type="method" value="X-ray"/>
    <property type="resolution" value="1.88 A"/>
    <property type="chains" value="A/B=1-204"/>
</dbReference>
<dbReference type="PDB" id="1PKH">
    <property type="method" value="X-ray"/>
    <property type="resolution" value="1.42 A"/>
    <property type="chains" value="A/B=1-204"/>
</dbReference>
<dbReference type="PDB" id="1PKJ">
    <property type="method" value="X-ray"/>
    <property type="resolution" value="2.10 A"/>
    <property type="chains" value="A/B=1-204"/>
</dbReference>
<dbReference type="PDB" id="1PKK">
    <property type="method" value="X-ray"/>
    <property type="resolution" value="1.77 A"/>
    <property type="chains" value="A/B=1-204"/>
</dbReference>
<dbReference type="PDB" id="2HXB">
    <property type="method" value="X-ray"/>
    <property type="resolution" value="2.55 A"/>
    <property type="chains" value="A=1-204"/>
</dbReference>
<dbReference type="PDB" id="2HXD">
    <property type="method" value="X-ray"/>
    <property type="resolution" value="2.30 A"/>
    <property type="chains" value="A=1-204"/>
</dbReference>
<dbReference type="PDB" id="3GF0">
    <property type="method" value="X-ray"/>
    <property type="resolution" value="2.62 A"/>
    <property type="chains" value="A=1-204"/>
</dbReference>
<dbReference type="PDBsum" id="1OGH"/>
<dbReference type="PDBsum" id="1PKH"/>
<dbReference type="PDBsum" id="1PKJ"/>
<dbReference type="PDBsum" id="1PKK"/>
<dbReference type="PDBsum" id="2HXB"/>
<dbReference type="PDBsum" id="2HXD"/>
<dbReference type="PDBsum" id="3GF0"/>
<dbReference type="SMR" id="Q57872"/>
<dbReference type="FunCoup" id="Q57872">
    <property type="interactions" value="29"/>
</dbReference>
<dbReference type="STRING" id="243232.MJ_0430"/>
<dbReference type="MoonProt" id="Q57872"/>
<dbReference type="PaxDb" id="243232-MJ_0430"/>
<dbReference type="EnsemblBacteria" id="AAB98415">
    <property type="protein sequence ID" value="AAB98415"/>
    <property type="gene ID" value="MJ_0430"/>
</dbReference>
<dbReference type="GeneID" id="1451290"/>
<dbReference type="KEGG" id="mja:MJ_0430"/>
<dbReference type="eggNOG" id="arCOG04048">
    <property type="taxonomic scope" value="Archaea"/>
</dbReference>
<dbReference type="HOGENOM" id="CLU_087476_2_1_2"/>
<dbReference type="InParanoid" id="Q57872"/>
<dbReference type="OrthoDB" id="33242at2157"/>
<dbReference type="PhylomeDB" id="Q57872"/>
<dbReference type="BioCyc" id="MetaCyc:MONOMER-17894"/>
<dbReference type="BRENDA" id="3.5.4.13">
    <property type="organism ID" value="3260"/>
</dbReference>
<dbReference type="BRENDA" id="3.5.4.30">
    <property type="organism ID" value="3260"/>
</dbReference>
<dbReference type="BRENDA" id="3.6.1.23">
    <property type="organism ID" value="3260"/>
</dbReference>
<dbReference type="SABIO-RK" id="Q57872"/>
<dbReference type="UniPathway" id="UPA00610">
    <property type="reaction ID" value="UER00667"/>
</dbReference>
<dbReference type="EvolutionaryTrace" id="Q57872"/>
<dbReference type="Proteomes" id="UP000000805">
    <property type="component" value="Chromosome"/>
</dbReference>
<dbReference type="GO" id="GO:0033973">
    <property type="term" value="F:dCTP deaminase (dUMP-forming) activity"/>
    <property type="evidence" value="ECO:0007669"/>
    <property type="project" value="UniProtKB-UniRule"/>
</dbReference>
<dbReference type="GO" id="GO:0008829">
    <property type="term" value="F:dCTP deaminase activity"/>
    <property type="evidence" value="ECO:0007669"/>
    <property type="project" value="InterPro"/>
</dbReference>
<dbReference type="GO" id="GO:0000166">
    <property type="term" value="F:nucleotide binding"/>
    <property type="evidence" value="ECO:0007669"/>
    <property type="project" value="UniProtKB-KW"/>
</dbReference>
<dbReference type="GO" id="GO:0006226">
    <property type="term" value="P:dUMP biosynthetic process"/>
    <property type="evidence" value="ECO:0007669"/>
    <property type="project" value="UniProtKB-UniRule"/>
</dbReference>
<dbReference type="GO" id="GO:0006229">
    <property type="term" value="P:dUTP biosynthetic process"/>
    <property type="evidence" value="ECO:0007669"/>
    <property type="project" value="InterPro"/>
</dbReference>
<dbReference type="CDD" id="cd07557">
    <property type="entry name" value="trimeric_dUTPase"/>
    <property type="match status" value="1"/>
</dbReference>
<dbReference type="Gene3D" id="2.70.40.10">
    <property type="match status" value="1"/>
</dbReference>
<dbReference type="HAMAP" id="MF_00146">
    <property type="entry name" value="dCTP_deaminase"/>
    <property type="match status" value="1"/>
</dbReference>
<dbReference type="InterPro" id="IPR011962">
    <property type="entry name" value="dCTP_deaminase"/>
</dbReference>
<dbReference type="InterPro" id="IPR036157">
    <property type="entry name" value="dUTPase-like_sf"/>
</dbReference>
<dbReference type="InterPro" id="IPR033704">
    <property type="entry name" value="dUTPase_trimeric"/>
</dbReference>
<dbReference type="NCBIfam" id="TIGR02274">
    <property type="entry name" value="dCTP_deam"/>
    <property type="match status" value="1"/>
</dbReference>
<dbReference type="PANTHER" id="PTHR42680">
    <property type="entry name" value="DCTP DEAMINASE"/>
    <property type="match status" value="1"/>
</dbReference>
<dbReference type="PANTHER" id="PTHR42680:SF3">
    <property type="entry name" value="DCTP DEAMINASE"/>
    <property type="match status" value="1"/>
</dbReference>
<dbReference type="Pfam" id="PF22769">
    <property type="entry name" value="DCD"/>
    <property type="match status" value="1"/>
</dbReference>
<dbReference type="SUPFAM" id="SSF51283">
    <property type="entry name" value="dUTPase-like"/>
    <property type="match status" value="1"/>
</dbReference>
<reference key="1">
    <citation type="journal article" date="1996" name="Science">
        <title>Complete genome sequence of the methanogenic archaeon, Methanococcus jannaschii.</title>
        <authorList>
            <person name="Bult C.J."/>
            <person name="White O."/>
            <person name="Olsen G.J."/>
            <person name="Zhou L."/>
            <person name="Fleischmann R.D."/>
            <person name="Sutton G.G."/>
            <person name="Blake J.A."/>
            <person name="FitzGerald L.M."/>
            <person name="Clayton R.A."/>
            <person name="Gocayne J.D."/>
            <person name="Kerlavage A.R."/>
            <person name="Dougherty B.A."/>
            <person name="Tomb J.-F."/>
            <person name="Adams M.D."/>
            <person name="Reich C.I."/>
            <person name="Overbeek R."/>
            <person name="Kirkness E.F."/>
            <person name="Weinstock K.G."/>
            <person name="Merrick J.M."/>
            <person name="Glodek A."/>
            <person name="Scott J.L."/>
            <person name="Geoghagen N.S.M."/>
            <person name="Weidman J.F."/>
            <person name="Fuhrmann J.L."/>
            <person name="Nguyen D."/>
            <person name="Utterback T.R."/>
            <person name="Kelley J.M."/>
            <person name="Peterson J.D."/>
            <person name="Sadow P.W."/>
            <person name="Hanna M.C."/>
            <person name="Cotton M.D."/>
            <person name="Roberts K.M."/>
            <person name="Hurst M.A."/>
            <person name="Kaine B.P."/>
            <person name="Borodovsky M."/>
            <person name="Klenk H.-P."/>
            <person name="Fraser C.M."/>
            <person name="Smith H.O."/>
            <person name="Woese C.R."/>
            <person name="Venter J.C."/>
        </authorList>
    </citation>
    <scope>NUCLEOTIDE SEQUENCE [LARGE SCALE GENOMIC DNA]</scope>
    <source>
        <strain>ATCC 43067 / DSM 2661 / JAL-1 / JCM 10045 / NBRC 100440</strain>
    </source>
</reference>
<reference key="2">
    <citation type="journal article" date="2003" name="J. Biol. Chem.">
        <title>A bifunctional dCTP deaminase-dUTP nucleotidohydrolase from the hyperthermophilic archaeon Methanocaldococcus jannaschii.</title>
        <authorList>
            <person name="Bjoernberg O."/>
            <person name="Neuhard J."/>
            <person name="Nyman P.O."/>
        </authorList>
    </citation>
    <scope>PROTEIN SEQUENCE OF 1-10</scope>
    <scope>FUNCTION</scope>
    <scope>CATALYTIC ACTIVITY</scope>
    <scope>COFACTOR</scope>
</reference>
<reference key="3">
    <citation type="journal article" date="2003" name="J. Biol. Chem.">
        <title>The Methanococcus jannaschii dCTP deaminase is a bifunctional deaminase and diphosphatase.</title>
        <authorList>
            <person name="Li H."/>
            <person name="Xu H."/>
            <person name="Graham D.E."/>
            <person name="White R.H."/>
        </authorList>
    </citation>
    <scope>FUNCTION</scope>
    <scope>CATALYTIC ACTIVITY</scope>
    <scope>COFACTOR</scope>
    <scope>ACTIVITY REGULATION</scope>
    <scope>BIOPHYSICOCHEMICAL PROPERTIES</scope>
    <scope>MASS SPECTROMETRY</scope>
    <scope>MUTAGENESIS OF ASP-135 AND GLU-145</scope>
</reference>
<reference evidence="12" key="4">
    <citation type="journal article" date="2003" name="J. Biol. Chem.">
        <title>Structure of the bifunctional dCTP deaminase-dUTPase from Methanocaldococcus jannaschii and its relation to other homotrimeric dUTPases.</title>
        <authorList>
            <person name="Johansson E."/>
            <person name="Bjoernberg O."/>
            <person name="Nyman P.O."/>
            <person name="Larsen S."/>
        </authorList>
    </citation>
    <scope>X-RAY CRYSTALLOGRAPHY (1.88 ANGSTROMS)</scope>
    <scope>SUBUNIT</scope>
</reference>
<reference evidence="13 14 15" key="5">
    <citation type="journal article" date="2003" name="J. Mol. Biol.">
        <title>Structural basis for recognition and catalysis by the bifunctional dCTP deaminase and dUTPase from Methanococcus jannaschii.</title>
        <authorList>
            <person name="Huffman J.L."/>
            <person name="Li H."/>
            <person name="White R.H."/>
            <person name="Tainer J.A."/>
        </authorList>
    </citation>
    <scope>X-RAY CRYSTALLOGRAPHY (1.42 ANGSTROMS) OF APOENZYME AND IN COMPLEXES WITH DCTP AND DUTP</scope>
    <scope>SUBUNIT</scope>
</reference>
<reference evidence="16 17" key="6">
    <citation type="submission" date="2006-08" db="PDB data bank">
        <title>Structural evidence for a concerted bifunctionality in dCTP deaminase-dUTPase from Methanocaldococcus jannaschii.</title>
        <authorList>
            <person name="Bynck J.H."/>
            <person name="Willemoes M."/>
            <person name="Larsen S."/>
            <person name="Johansson E."/>
        </authorList>
    </citation>
    <scope>X-RAY CRYSTALLOGRAPHY (2.30 ANGSTROMS) OF WILD-TYPE AND OF MUTANT ALA-145 IN COMPLEX WITH DUTP</scope>
</reference>
<reference evidence="18" key="7">
    <citation type="submission" date="2009-02" db="PDB data bank">
        <title>Pre-steady state kinetic and structural evidence for a concerted biofunctionality in dCTP deaminase-dUTPase from Methanocaldococcus jannaschii.</title>
        <authorList>
            <person name="Siggaard J.H.B."/>
            <person name="Johansson E."/>
            <person name="Vognsen T."/>
            <person name="Helt S.S."/>
            <person name="Harris P."/>
            <person name="Larsen S."/>
            <person name="Willemoes M."/>
        </authorList>
    </citation>
    <scope>X-RAY CRYSTALLOGRAPHY (2.62 ANGSTROMS)</scope>
</reference>
<sequence length="204" mass="23432">MILSDKDIIDYVTSKRIIIKPFNKDFVGPCSYDVTLGDEFIIYDDEVYDLSKELNYKRIKIKNSILVCPLNYNLTEEKINYFKEKYNVDYVVEGGVLGTTNEYIELPNDISAQYQGRSSLGRVFLTSHQTAGWIDAGFKGKITLEIVAFDKPVILYKNQRIGQLIFSKLLSPADVGYSERKTSKYAYQKSVMPSLIHLDNHKKD</sequence>
<evidence type="ECO:0000250" key="1">
    <source>
        <dbReference type="UniProtKB" id="P28248"/>
    </source>
</evidence>
<evidence type="ECO:0000255" key="2">
    <source>
        <dbReference type="HAMAP-Rule" id="MF_00146"/>
    </source>
</evidence>
<evidence type="ECO:0000269" key="3">
    <source>
    </source>
</evidence>
<evidence type="ECO:0000269" key="4">
    <source>
    </source>
</evidence>
<evidence type="ECO:0000269" key="5">
    <source>
    </source>
</evidence>
<evidence type="ECO:0000269" key="6">
    <source>
    </source>
</evidence>
<evidence type="ECO:0000303" key="7">
    <source>
    </source>
</evidence>
<evidence type="ECO:0000303" key="8">
    <source>
    </source>
</evidence>
<evidence type="ECO:0000305" key="9"/>
<evidence type="ECO:0000305" key="10">
    <source>
    </source>
</evidence>
<evidence type="ECO:0000305" key="11">
    <source ref="6"/>
</evidence>
<evidence type="ECO:0007744" key="12">
    <source>
        <dbReference type="PDB" id="1OGH"/>
    </source>
</evidence>
<evidence type="ECO:0007744" key="13">
    <source>
        <dbReference type="PDB" id="1PKH"/>
    </source>
</evidence>
<evidence type="ECO:0007744" key="14">
    <source>
        <dbReference type="PDB" id="1PKJ"/>
    </source>
</evidence>
<evidence type="ECO:0007744" key="15">
    <source>
        <dbReference type="PDB" id="1PKK"/>
    </source>
</evidence>
<evidence type="ECO:0007744" key="16">
    <source>
        <dbReference type="PDB" id="2HXB"/>
    </source>
</evidence>
<evidence type="ECO:0007744" key="17">
    <source>
        <dbReference type="PDB" id="2HXD"/>
    </source>
</evidence>
<evidence type="ECO:0007744" key="18">
    <source>
        <dbReference type="PDB" id="3GF0"/>
    </source>
</evidence>
<evidence type="ECO:0007829" key="19">
    <source>
        <dbReference type="PDB" id="1OGH"/>
    </source>
</evidence>
<evidence type="ECO:0007829" key="20">
    <source>
        <dbReference type="PDB" id="1PKH"/>
    </source>
</evidence>
<evidence type="ECO:0007829" key="21">
    <source>
        <dbReference type="PDB" id="2HXD"/>
    </source>
</evidence>
<organism>
    <name type="scientific">Methanocaldococcus jannaschii (strain ATCC 43067 / DSM 2661 / JAL-1 / JCM 10045 / NBRC 100440)</name>
    <name type="common">Methanococcus jannaschii</name>
    <dbReference type="NCBI Taxonomy" id="243232"/>
    <lineage>
        <taxon>Archaea</taxon>
        <taxon>Methanobacteriati</taxon>
        <taxon>Methanobacteriota</taxon>
        <taxon>Methanomada group</taxon>
        <taxon>Methanococci</taxon>
        <taxon>Methanococcales</taxon>
        <taxon>Methanocaldococcaceae</taxon>
        <taxon>Methanocaldococcus</taxon>
    </lineage>
</organism>
<accession>Q57872</accession>
<feature type="chain" id="PRO_0000156029" description="dCTP deaminase, dUMP-forming">
    <location>
        <begin position="1"/>
        <end position="204"/>
    </location>
</feature>
<feature type="active site" description="Proton donor/acceptor" evidence="1 2">
    <location>
        <position position="145"/>
    </location>
</feature>
<feature type="binding site" evidence="2">
    <location>
        <begin position="117"/>
        <end position="122"/>
    </location>
    <ligand>
        <name>dCTP</name>
        <dbReference type="ChEBI" id="CHEBI:61481"/>
    </ligand>
</feature>
<feature type="binding site" evidence="10">
    <location>
        <position position="128"/>
    </location>
    <ligand>
        <name>dCTP</name>
        <dbReference type="ChEBI" id="CHEBI:61481"/>
    </ligand>
</feature>
<feature type="binding site" evidence="11">
    <location>
        <position position="132"/>
    </location>
    <ligand>
        <name>dCTP</name>
        <dbReference type="ChEBI" id="CHEBI:61481"/>
    </ligand>
</feature>
<feature type="binding site" evidence="2 11">
    <location>
        <position position="135"/>
    </location>
    <ligand>
        <name>dCTP</name>
        <dbReference type="ChEBI" id="CHEBI:61481"/>
    </ligand>
</feature>
<feature type="binding site" evidence="2 10 11">
    <location>
        <begin position="143"/>
        <end position="145"/>
    </location>
    <ligand>
        <name>dCTP</name>
        <dbReference type="ChEBI" id="CHEBI:61481"/>
    </ligand>
</feature>
<feature type="binding site" evidence="2">
    <location>
        <position position="163"/>
    </location>
    <ligand>
        <name>dCTP</name>
        <dbReference type="ChEBI" id="CHEBI:61481"/>
    </ligand>
</feature>
<feature type="binding site" evidence="2 11">
    <location>
        <position position="177"/>
    </location>
    <ligand>
        <name>dCTP</name>
        <dbReference type="ChEBI" id="CHEBI:61481"/>
    </ligand>
</feature>
<feature type="binding site" evidence="2 11">
    <location>
        <position position="184"/>
    </location>
    <ligand>
        <name>dCTP</name>
        <dbReference type="ChEBI" id="CHEBI:61481"/>
    </ligand>
</feature>
<feature type="binding site" evidence="2 11">
    <location>
        <position position="188"/>
    </location>
    <ligand>
        <name>dCTP</name>
        <dbReference type="ChEBI" id="CHEBI:61481"/>
    </ligand>
</feature>
<feature type="site" description="Important for bifunctional activity" evidence="2">
    <location>
        <begin position="132"/>
        <end position="133"/>
    </location>
</feature>
<feature type="mutagenesis site" description="Loss of activity." evidence="3">
    <original>D</original>
    <variation>N</variation>
    <location>
        <position position="135"/>
    </location>
</feature>
<feature type="mutagenesis site" description="Loss of dCTP deaminase activity, but retains 25% dUTP pyrophosphatase activity." evidence="3">
    <original>E</original>
    <variation>Q</variation>
    <location>
        <position position="145"/>
    </location>
</feature>
<feature type="helix" evidence="20">
    <location>
        <begin position="5"/>
        <end position="13"/>
    </location>
</feature>
<feature type="strand" evidence="20">
    <location>
        <begin position="16"/>
        <end position="21"/>
    </location>
</feature>
<feature type="helix" evidence="20">
    <location>
        <begin position="24"/>
        <end position="26"/>
    </location>
</feature>
<feature type="strand" evidence="20">
    <location>
        <begin position="32"/>
        <end position="36"/>
    </location>
</feature>
<feature type="strand" evidence="20">
    <location>
        <begin position="38"/>
        <end position="43"/>
    </location>
</feature>
<feature type="strand" evidence="19">
    <location>
        <begin position="45"/>
        <end position="47"/>
    </location>
</feature>
<feature type="strand" evidence="20">
    <location>
        <begin position="56"/>
        <end position="60"/>
    </location>
</feature>
<feature type="strand" evidence="20">
    <location>
        <begin position="62"/>
        <end position="68"/>
    </location>
</feature>
<feature type="helix" evidence="20">
    <location>
        <begin position="76"/>
        <end position="86"/>
    </location>
</feature>
<feature type="strand" evidence="20">
    <location>
        <begin position="89"/>
        <end position="94"/>
    </location>
</feature>
<feature type="strand" evidence="20">
    <location>
        <begin position="96"/>
        <end position="105"/>
    </location>
</feature>
<feature type="strand" evidence="20">
    <location>
        <begin position="110"/>
        <end position="116"/>
    </location>
</feature>
<feature type="helix" evidence="20">
    <location>
        <begin position="118"/>
        <end position="121"/>
    </location>
</feature>
<feature type="turn" evidence="20">
    <location>
        <begin position="122"/>
        <end position="124"/>
    </location>
</feature>
<feature type="strand" evidence="20">
    <location>
        <begin position="125"/>
        <end position="127"/>
    </location>
</feature>
<feature type="strand" evidence="20">
    <location>
        <begin position="139"/>
        <end position="151"/>
    </location>
</feature>
<feature type="strand" evidence="20">
    <location>
        <begin position="153"/>
        <end position="156"/>
    </location>
</feature>
<feature type="strand" evidence="20">
    <location>
        <begin position="160"/>
        <end position="168"/>
    </location>
</feature>
<feature type="strand" evidence="20">
    <location>
        <begin position="176"/>
        <end position="180"/>
    </location>
</feature>
<feature type="helix" evidence="21">
    <location>
        <begin position="196"/>
        <end position="198"/>
    </location>
</feature>